<evidence type="ECO:0000250" key="1"/>
<evidence type="ECO:0000255" key="2"/>
<evidence type="ECO:0000255" key="3">
    <source>
        <dbReference type="PROSITE-ProRule" id="PRU10092"/>
    </source>
</evidence>
<evidence type="ECO:0000255" key="4">
    <source>
        <dbReference type="PROSITE-ProRule" id="PRU10093"/>
    </source>
</evidence>
<evidence type="ECO:0000256" key="5">
    <source>
        <dbReference type="SAM" id="MobiDB-lite"/>
    </source>
</evidence>
<evidence type="ECO:0000305" key="6"/>
<sequence length="758" mass="84902">MGSFLRSFRRDVGSSTPSVGATPAKKEPLALPITPLEKMLQEMGSDSVRQDGSDKFFGMENYGNTCYCNSILQCLYYSVPFREAVLNYPTRTPIESLEAALAKNLRYQNFAANQEAEAQAEKQRLANAQRPGAPPAQPPKPEDKDSSEYKKKIALQSLPLLETKNNAGSYGMSESLFTSLKDIFESVVASQSRIGIVRPQHFLDVLRRENEMFRSAMHQDAHEFLNLVLNEVVANVEAEAMKQPIPSLPPADTTDSSRQSISSGSKTPNTTRWVHELFEGTLTSETQCLTCENVSQRDEIFLDLSVDLEQHSSVTSCLRKFSAEEMLCERNKFHCDNCGGLQEAEKRMKIKRLPRILALHLKRFKYTEDLQRLQKLFHRVVYPYHLRLFNTTDDAEDPDRLYELYAVVVHIGGGPYHGHYVSIIKTQDRGWLLFDDEMVEPVDKNYVRNFFGDKPGLACAYVLFYQETTLEAVLKEQEMENMNASAADANEAAVKPNGFPQPAGLAHVHSASQIPVQDEPQRHTGLRRAPTAPQLPTHTEYPGPDIEPSSPAVATPPPVPPIPETANRPLSPKKSDIQSKKERAKEEKERKAAEKEMEKQRRKEQEARVKENQRREEAELKAALEASKASKADEDRRNPTENGKDGDPKRSSNGLSRLKRGSKSFSQRLGKDKESRASSSGLPSVPSAEPLTPNPVPLEPVQQLSPRKASPPKESHVVHKPLGQDDEPDALKSPKGDRAGHGKWRSFSIRKKSFSILS</sequence>
<protein>
    <recommendedName>
        <fullName>Probable ubiquitin carboxyl-terminal hydrolase creB</fullName>
        <ecNumber>3.4.19.12</ecNumber>
    </recommendedName>
    <alternativeName>
        <fullName>Carbon catabolite repression protein B</fullName>
    </alternativeName>
    <alternativeName>
        <fullName>Deubiquitinating enzyme creB</fullName>
    </alternativeName>
    <alternativeName>
        <fullName>Ubiquitin thioesterase creB</fullName>
    </alternativeName>
    <alternativeName>
        <fullName>Ubiquitin-hydrolyzing enzyme creB</fullName>
    </alternativeName>
    <alternativeName>
        <fullName>Ubiquitin-specific-processing protease creB</fullName>
    </alternativeName>
</protein>
<gene>
    <name type="primary">creB</name>
    <name type="ORF">An01g08470</name>
</gene>
<keyword id="KW-0175">Coiled coil</keyword>
<keyword id="KW-0378">Hydrolase</keyword>
<keyword id="KW-0645">Protease</keyword>
<keyword id="KW-1185">Reference proteome</keyword>
<keyword id="KW-0788">Thiol protease</keyword>
<keyword id="KW-0833">Ubl conjugation pathway</keyword>
<organism>
    <name type="scientific">Aspergillus niger (strain ATCC MYA-4892 / CBS 513.88 / FGSC A1513)</name>
    <dbReference type="NCBI Taxonomy" id="425011"/>
    <lineage>
        <taxon>Eukaryota</taxon>
        <taxon>Fungi</taxon>
        <taxon>Dikarya</taxon>
        <taxon>Ascomycota</taxon>
        <taxon>Pezizomycotina</taxon>
        <taxon>Eurotiomycetes</taxon>
        <taxon>Eurotiomycetidae</taxon>
        <taxon>Eurotiales</taxon>
        <taxon>Aspergillaceae</taxon>
        <taxon>Aspergillus</taxon>
        <taxon>Aspergillus subgen. Circumdati</taxon>
    </lineage>
</organism>
<accession>A2Q9N1</accession>
<proteinExistence type="inferred from homology"/>
<name>CREB_ASPNC</name>
<feature type="chain" id="PRO_0000395681" description="Probable ubiquitin carboxyl-terminal hydrolase creB">
    <location>
        <begin position="1"/>
        <end position="758"/>
    </location>
</feature>
<feature type="domain" description="USP">
    <location>
        <begin position="57"/>
        <end position="468"/>
    </location>
</feature>
<feature type="region of interest" description="Disordered" evidence="5">
    <location>
        <begin position="1"/>
        <end position="27"/>
    </location>
</feature>
<feature type="region of interest" description="Disordered" evidence="5">
    <location>
        <begin position="116"/>
        <end position="148"/>
    </location>
</feature>
<feature type="region of interest" description="Disordered" evidence="5">
    <location>
        <begin position="243"/>
        <end position="268"/>
    </location>
</feature>
<feature type="region of interest" description="Disordered" evidence="5">
    <location>
        <begin position="514"/>
        <end position="744"/>
    </location>
</feature>
<feature type="coiled-coil region" evidence="2">
    <location>
        <begin position="573"/>
        <end position="631"/>
    </location>
</feature>
<feature type="compositionally biased region" description="Polar residues" evidence="5">
    <location>
        <begin position="253"/>
        <end position="268"/>
    </location>
</feature>
<feature type="compositionally biased region" description="Pro residues" evidence="5">
    <location>
        <begin position="554"/>
        <end position="563"/>
    </location>
</feature>
<feature type="compositionally biased region" description="Basic and acidic residues" evidence="5">
    <location>
        <begin position="573"/>
        <end position="650"/>
    </location>
</feature>
<feature type="compositionally biased region" description="Basic and acidic residues" evidence="5">
    <location>
        <begin position="729"/>
        <end position="740"/>
    </location>
</feature>
<feature type="active site" description="Nucleophile" evidence="3 4">
    <location>
        <position position="66"/>
    </location>
</feature>
<feature type="active site" description="Proton acceptor" evidence="3 4">
    <location>
        <position position="419"/>
    </location>
</feature>
<dbReference type="EC" id="3.4.19.12"/>
<dbReference type="EMBL" id="AM269976">
    <property type="protein sequence ID" value="CAK43937.1"/>
    <property type="status" value="ALT_SEQ"/>
    <property type="molecule type" value="Genomic_DNA"/>
</dbReference>
<dbReference type="RefSeq" id="XP_001389270.2">
    <property type="nucleotide sequence ID" value="XM_001389233.2"/>
</dbReference>
<dbReference type="SMR" id="A2Q9N1"/>
<dbReference type="EnsemblFungi" id="CAK43937">
    <property type="protein sequence ID" value="CAK43937"/>
    <property type="gene ID" value="An01g08470"/>
</dbReference>
<dbReference type="VEuPathDB" id="FungiDB:An01g08470"/>
<dbReference type="OrthoDB" id="109616at5052"/>
<dbReference type="Proteomes" id="UP000006706">
    <property type="component" value="Chromosome 2R"/>
</dbReference>
<dbReference type="GO" id="GO:0005829">
    <property type="term" value="C:cytosol"/>
    <property type="evidence" value="ECO:0007669"/>
    <property type="project" value="TreeGrafter"/>
</dbReference>
<dbReference type="GO" id="GO:0005634">
    <property type="term" value="C:nucleus"/>
    <property type="evidence" value="ECO:0007669"/>
    <property type="project" value="TreeGrafter"/>
</dbReference>
<dbReference type="GO" id="GO:0004843">
    <property type="term" value="F:cysteine-type deubiquitinase activity"/>
    <property type="evidence" value="ECO:0000250"/>
    <property type="project" value="UniProtKB"/>
</dbReference>
<dbReference type="GO" id="GO:0045013">
    <property type="term" value="P:carbon catabolite repression of transcription"/>
    <property type="evidence" value="ECO:0000250"/>
    <property type="project" value="UniProtKB"/>
</dbReference>
<dbReference type="GO" id="GO:0016579">
    <property type="term" value="P:protein deubiquitination"/>
    <property type="evidence" value="ECO:0007669"/>
    <property type="project" value="InterPro"/>
</dbReference>
<dbReference type="GO" id="GO:0006511">
    <property type="term" value="P:ubiquitin-dependent protein catabolic process"/>
    <property type="evidence" value="ECO:0000250"/>
    <property type="project" value="UniProtKB"/>
</dbReference>
<dbReference type="CDD" id="cd02663">
    <property type="entry name" value="Peptidase_C19G"/>
    <property type="match status" value="1"/>
</dbReference>
<dbReference type="FunFam" id="3.90.70.10:FF:000075">
    <property type="entry name" value="Ubiquitin carboxyl-terminal hydrolase creB"/>
    <property type="match status" value="1"/>
</dbReference>
<dbReference type="Gene3D" id="3.90.70.10">
    <property type="entry name" value="Cysteine proteinases"/>
    <property type="match status" value="1"/>
</dbReference>
<dbReference type="InterPro" id="IPR038765">
    <property type="entry name" value="Papain-like_cys_pep_sf"/>
</dbReference>
<dbReference type="InterPro" id="IPR050164">
    <property type="entry name" value="Peptidase_C19"/>
</dbReference>
<dbReference type="InterPro" id="IPR001394">
    <property type="entry name" value="Peptidase_C19_UCH"/>
</dbReference>
<dbReference type="InterPro" id="IPR018200">
    <property type="entry name" value="USP_CS"/>
</dbReference>
<dbReference type="InterPro" id="IPR028889">
    <property type="entry name" value="USP_dom"/>
</dbReference>
<dbReference type="PANTHER" id="PTHR24006:SF733">
    <property type="entry name" value="RE52890P"/>
    <property type="match status" value="1"/>
</dbReference>
<dbReference type="PANTHER" id="PTHR24006">
    <property type="entry name" value="UBIQUITIN CARBOXYL-TERMINAL HYDROLASE"/>
    <property type="match status" value="1"/>
</dbReference>
<dbReference type="Pfam" id="PF00443">
    <property type="entry name" value="UCH"/>
    <property type="match status" value="1"/>
</dbReference>
<dbReference type="SUPFAM" id="SSF54001">
    <property type="entry name" value="Cysteine proteinases"/>
    <property type="match status" value="1"/>
</dbReference>
<dbReference type="PROSITE" id="PS00972">
    <property type="entry name" value="USP_1"/>
    <property type="match status" value="1"/>
</dbReference>
<dbReference type="PROSITE" id="PS00973">
    <property type="entry name" value="USP_2"/>
    <property type="match status" value="1"/>
</dbReference>
<dbReference type="PROSITE" id="PS50235">
    <property type="entry name" value="USP_3"/>
    <property type="match status" value="1"/>
</dbReference>
<comment type="function">
    <text evidence="1">Ubiquitin thioesterase component of the regulatory network controlling carbon source utilization through ubiquitination and deubiquitination involving creA, creB, creC, creD and acrB. Deubiquitinates the creA catabolic repressor and the quinate permease qutD. Also plays a role in response to carbon starvation and the control of extracellular proteases activity (By similarity).</text>
</comment>
<comment type="catalytic activity">
    <reaction>
        <text>Thiol-dependent hydrolysis of ester, thioester, amide, peptide and isopeptide bonds formed by the C-terminal Gly of ubiquitin (a 76-residue protein attached to proteins as an intracellular targeting signal).</text>
        <dbReference type="EC" id="3.4.19.12"/>
    </reaction>
</comment>
<comment type="subunit">
    <text evidence="1">Interacts with creA, creC and qutD.</text>
</comment>
<comment type="similarity">
    <text evidence="6">Belongs to the peptidase C19 family.</text>
</comment>
<comment type="sequence caution" evidence="6">
    <conflict type="erroneous gene model prediction">
        <sequence resource="EMBL-CDS" id="CAK43937"/>
    </conflict>
</comment>
<reference key="1">
    <citation type="journal article" date="2007" name="Nat. Biotechnol.">
        <title>Genome sequencing and analysis of the versatile cell factory Aspergillus niger CBS 513.88.</title>
        <authorList>
            <person name="Pel H.J."/>
            <person name="de Winde J.H."/>
            <person name="Archer D.B."/>
            <person name="Dyer P.S."/>
            <person name="Hofmann G."/>
            <person name="Schaap P.J."/>
            <person name="Turner G."/>
            <person name="de Vries R.P."/>
            <person name="Albang R."/>
            <person name="Albermann K."/>
            <person name="Andersen M.R."/>
            <person name="Bendtsen J.D."/>
            <person name="Benen J.A.E."/>
            <person name="van den Berg M."/>
            <person name="Breestraat S."/>
            <person name="Caddick M.X."/>
            <person name="Contreras R."/>
            <person name="Cornell M."/>
            <person name="Coutinho P.M."/>
            <person name="Danchin E.G.J."/>
            <person name="Debets A.J.M."/>
            <person name="Dekker P."/>
            <person name="van Dijck P.W.M."/>
            <person name="van Dijk A."/>
            <person name="Dijkhuizen L."/>
            <person name="Driessen A.J.M."/>
            <person name="d'Enfert C."/>
            <person name="Geysens S."/>
            <person name="Goosen C."/>
            <person name="Groot G.S.P."/>
            <person name="de Groot P.W.J."/>
            <person name="Guillemette T."/>
            <person name="Henrissat B."/>
            <person name="Herweijer M."/>
            <person name="van den Hombergh J.P.T.W."/>
            <person name="van den Hondel C.A.M.J.J."/>
            <person name="van der Heijden R.T.J.M."/>
            <person name="van der Kaaij R.M."/>
            <person name="Klis F.M."/>
            <person name="Kools H.J."/>
            <person name="Kubicek C.P."/>
            <person name="van Kuyk P.A."/>
            <person name="Lauber J."/>
            <person name="Lu X."/>
            <person name="van der Maarel M.J.E.C."/>
            <person name="Meulenberg R."/>
            <person name="Menke H."/>
            <person name="Mortimer M.A."/>
            <person name="Nielsen J."/>
            <person name="Oliver S.G."/>
            <person name="Olsthoorn M."/>
            <person name="Pal K."/>
            <person name="van Peij N.N.M.E."/>
            <person name="Ram A.F.J."/>
            <person name="Rinas U."/>
            <person name="Roubos J.A."/>
            <person name="Sagt C.M.J."/>
            <person name="Schmoll M."/>
            <person name="Sun J."/>
            <person name="Ussery D."/>
            <person name="Varga J."/>
            <person name="Vervecken W."/>
            <person name="van de Vondervoort P.J.J."/>
            <person name="Wedler H."/>
            <person name="Woesten H.A.B."/>
            <person name="Zeng A.-P."/>
            <person name="van Ooyen A.J.J."/>
            <person name="Visser J."/>
            <person name="Stam H."/>
        </authorList>
    </citation>
    <scope>NUCLEOTIDE SEQUENCE [LARGE SCALE GENOMIC DNA]</scope>
    <source>
        <strain>ATCC MYA-4892 / CBS 513.88 / FGSC A1513</strain>
    </source>
</reference>